<reference key="1">
    <citation type="journal article" date="2006" name="Proc. Natl. Acad. Sci. U.S.A.">
        <title>Comparative genomics of the lactic acid bacteria.</title>
        <authorList>
            <person name="Makarova K.S."/>
            <person name="Slesarev A."/>
            <person name="Wolf Y.I."/>
            <person name="Sorokin A."/>
            <person name="Mirkin B."/>
            <person name="Koonin E.V."/>
            <person name="Pavlov A."/>
            <person name="Pavlova N."/>
            <person name="Karamychev V."/>
            <person name="Polouchine N."/>
            <person name="Shakhova V."/>
            <person name="Grigoriev I."/>
            <person name="Lou Y."/>
            <person name="Rohksar D."/>
            <person name="Lucas S."/>
            <person name="Huang K."/>
            <person name="Goodstein D.M."/>
            <person name="Hawkins T."/>
            <person name="Plengvidhya V."/>
            <person name="Welker D."/>
            <person name="Hughes J."/>
            <person name="Goh Y."/>
            <person name="Benson A."/>
            <person name="Baldwin K."/>
            <person name="Lee J.-H."/>
            <person name="Diaz-Muniz I."/>
            <person name="Dosti B."/>
            <person name="Smeianov V."/>
            <person name="Wechter W."/>
            <person name="Barabote R."/>
            <person name="Lorca G."/>
            <person name="Altermann E."/>
            <person name="Barrangou R."/>
            <person name="Ganesan B."/>
            <person name="Xie Y."/>
            <person name="Rawsthorne H."/>
            <person name="Tamir D."/>
            <person name="Parker C."/>
            <person name="Breidt F."/>
            <person name="Broadbent J.R."/>
            <person name="Hutkins R."/>
            <person name="O'Sullivan D."/>
            <person name="Steele J."/>
            <person name="Unlu G."/>
            <person name="Saier M.H. Jr."/>
            <person name="Klaenhammer T."/>
            <person name="Richardson P."/>
            <person name="Kozyavkin S."/>
            <person name="Weimer B.C."/>
            <person name="Mills D.A."/>
        </authorList>
    </citation>
    <scope>NUCLEOTIDE SEQUENCE [LARGE SCALE GENOMIC DNA]</scope>
    <source>
        <strain>ATCC 334 / BCRC 17002 / CCUG 31169 / CIP 107868 / KCTC 3260 / NRRL B-441</strain>
    </source>
</reference>
<evidence type="ECO:0000255" key="1">
    <source>
        <dbReference type="HAMAP-Rule" id="MF_00135"/>
    </source>
</evidence>
<comment type="catalytic activity">
    <reaction evidence="1">
        <text>N-(5-phospho-beta-D-ribosyl)anthranilate = 1-(2-carboxyphenylamino)-1-deoxy-D-ribulose 5-phosphate</text>
        <dbReference type="Rhea" id="RHEA:21540"/>
        <dbReference type="ChEBI" id="CHEBI:18277"/>
        <dbReference type="ChEBI" id="CHEBI:58613"/>
        <dbReference type="EC" id="5.3.1.24"/>
    </reaction>
</comment>
<comment type="pathway">
    <text evidence="1">Amino-acid biosynthesis; L-tryptophan biosynthesis; L-tryptophan from chorismate: step 3/5.</text>
</comment>
<comment type="similarity">
    <text evidence="1">Belongs to the TrpF family.</text>
</comment>
<keyword id="KW-0028">Amino-acid biosynthesis</keyword>
<keyword id="KW-0057">Aromatic amino acid biosynthesis</keyword>
<keyword id="KW-0413">Isomerase</keyword>
<keyword id="KW-1185">Reference proteome</keyword>
<keyword id="KW-0822">Tryptophan biosynthesis</keyword>
<protein>
    <recommendedName>
        <fullName evidence="1">N-(5'-phosphoribosyl)anthranilate isomerase</fullName>
        <shortName evidence="1">PRAI</shortName>
        <ecNumber evidence="1">5.3.1.24</ecNumber>
    </recommendedName>
</protein>
<sequence>MVLVKICGLMHSEDILAVNTAGADFAGFVFAPGRHQISLEQALSLKQLLHPKIKTVGVFVNEPVAEILAIYQAGAIDVAQLHGKSTPTEITQFQQAGLKVIQVFERQAIDLTSMADYLMVDSGKGSGQLLNLKAIPHISRPLILAGGLTPLNVRQAVQLVQPTMVDVSSGVETNGHKDADKITQFIQQAKEDIIYEDIK</sequence>
<proteinExistence type="inferred from homology"/>
<gene>
    <name evidence="1" type="primary">trpF</name>
    <name type="ordered locus">LSEI_0076</name>
</gene>
<accession>Q03CY2</accession>
<organism>
    <name type="scientific">Lacticaseibacillus paracasei (strain ATCC 334 / BCRC 17002 / CCUG 31169 / CIP 107868 / KCTC 3260 / NRRL B-441)</name>
    <name type="common">Lactobacillus paracasei</name>
    <dbReference type="NCBI Taxonomy" id="321967"/>
    <lineage>
        <taxon>Bacteria</taxon>
        <taxon>Bacillati</taxon>
        <taxon>Bacillota</taxon>
        <taxon>Bacilli</taxon>
        <taxon>Lactobacillales</taxon>
        <taxon>Lactobacillaceae</taxon>
        <taxon>Lacticaseibacillus</taxon>
    </lineage>
</organism>
<feature type="chain" id="PRO_1000018600" description="N-(5'-phosphoribosyl)anthranilate isomerase">
    <location>
        <begin position="1"/>
        <end position="199"/>
    </location>
</feature>
<dbReference type="EC" id="5.3.1.24" evidence="1"/>
<dbReference type="EMBL" id="CP000423">
    <property type="protein sequence ID" value="ABJ68940.1"/>
    <property type="molecule type" value="Genomic_DNA"/>
</dbReference>
<dbReference type="RefSeq" id="WP_003592587.1">
    <property type="nucleotide sequence ID" value="NC_008526.1"/>
</dbReference>
<dbReference type="RefSeq" id="YP_805382.1">
    <property type="nucleotide sequence ID" value="NC_008526.1"/>
</dbReference>
<dbReference type="SMR" id="Q03CY2"/>
<dbReference type="STRING" id="321967.LSEI_0076"/>
<dbReference type="PaxDb" id="321967-LSEI_0076"/>
<dbReference type="KEGG" id="lca:LSEI_0076"/>
<dbReference type="PATRIC" id="fig|321967.11.peg.101"/>
<dbReference type="HOGENOM" id="CLU_076364_1_0_9"/>
<dbReference type="UniPathway" id="UPA00035">
    <property type="reaction ID" value="UER00042"/>
</dbReference>
<dbReference type="Proteomes" id="UP000001651">
    <property type="component" value="Chromosome"/>
</dbReference>
<dbReference type="GO" id="GO:0004640">
    <property type="term" value="F:phosphoribosylanthranilate isomerase activity"/>
    <property type="evidence" value="ECO:0007669"/>
    <property type="project" value="UniProtKB-UniRule"/>
</dbReference>
<dbReference type="GO" id="GO:0000162">
    <property type="term" value="P:L-tryptophan biosynthetic process"/>
    <property type="evidence" value="ECO:0007669"/>
    <property type="project" value="UniProtKB-UniRule"/>
</dbReference>
<dbReference type="CDD" id="cd00405">
    <property type="entry name" value="PRAI"/>
    <property type="match status" value="1"/>
</dbReference>
<dbReference type="Gene3D" id="3.20.20.70">
    <property type="entry name" value="Aldolase class I"/>
    <property type="match status" value="1"/>
</dbReference>
<dbReference type="HAMAP" id="MF_00135">
    <property type="entry name" value="PRAI"/>
    <property type="match status" value="1"/>
</dbReference>
<dbReference type="InterPro" id="IPR013785">
    <property type="entry name" value="Aldolase_TIM"/>
</dbReference>
<dbReference type="InterPro" id="IPR001240">
    <property type="entry name" value="PRAI_dom"/>
</dbReference>
<dbReference type="InterPro" id="IPR011060">
    <property type="entry name" value="RibuloseP-bd_barrel"/>
</dbReference>
<dbReference type="InterPro" id="IPR044643">
    <property type="entry name" value="TrpF_fam"/>
</dbReference>
<dbReference type="PANTHER" id="PTHR42894">
    <property type="entry name" value="N-(5'-PHOSPHORIBOSYL)ANTHRANILATE ISOMERASE"/>
    <property type="match status" value="1"/>
</dbReference>
<dbReference type="PANTHER" id="PTHR42894:SF1">
    <property type="entry name" value="N-(5'-PHOSPHORIBOSYL)ANTHRANILATE ISOMERASE"/>
    <property type="match status" value="1"/>
</dbReference>
<dbReference type="Pfam" id="PF00697">
    <property type="entry name" value="PRAI"/>
    <property type="match status" value="1"/>
</dbReference>
<dbReference type="SUPFAM" id="SSF51366">
    <property type="entry name" value="Ribulose-phoshate binding barrel"/>
    <property type="match status" value="1"/>
</dbReference>
<name>TRPF_LACP3</name>